<protein>
    <recommendedName>
        <fullName evidence="1">Phenylalanine--tRNA ligase alpha subunit</fullName>
        <ecNumber evidence="1">6.1.1.20</ecNumber>
    </recommendedName>
    <alternativeName>
        <fullName evidence="1">Phenylalanyl-tRNA synthetase alpha subunit</fullName>
        <shortName evidence="1">PheRS</shortName>
    </alternativeName>
</protein>
<keyword id="KW-0030">Aminoacyl-tRNA synthetase</keyword>
<keyword id="KW-0067">ATP-binding</keyword>
<keyword id="KW-0963">Cytoplasm</keyword>
<keyword id="KW-0436">Ligase</keyword>
<keyword id="KW-0460">Magnesium</keyword>
<keyword id="KW-0479">Metal-binding</keyword>
<keyword id="KW-0547">Nucleotide-binding</keyword>
<keyword id="KW-0648">Protein biosynthesis</keyword>
<sequence>MSQIESLSQIEGKLNNLSLLANENIKNAKSDSELDQLRVSLLGKKGELSIILKTMGKLSSVDRPIIGQKANLIKINLQDLITERKNQLISEAIDKQIEDEKIDVTIPSTGTLPGNKHPLISTQDEIIDIFCGLGYSVENGPEIESDFYNFESLNIPKNHPARDMQDTFYLDENRLLRTHTSPVQIRYLENNPPPVRIIAPGRVYRRDAVDATHSPVFNQVEVLCIDQDINFSHLRGTVLTFLKTFFGDIPVRFRASYFPFTEPSAEVDVQWKGKWLEVMGCGMVDPKVLEKLGIDSEKWTGFAAGLGVERFCMVRHQIDDIRRFYTNDLRFLKQF</sequence>
<reference key="1">
    <citation type="journal article" date="2003" name="Nature">
        <title>Genome divergence in two Prochlorococcus ecotypes reflects oceanic niche differentiation.</title>
        <authorList>
            <person name="Rocap G."/>
            <person name="Larimer F.W."/>
            <person name="Lamerdin J.E."/>
            <person name="Malfatti S."/>
            <person name="Chain P."/>
            <person name="Ahlgren N.A."/>
            <person name="Arellano A."/>
            <person name="Coleman M."/>
            <person name="Hauser L."/>
            <person name="Hess W.R."/>
            <person name="Johnson Z.I."/>
            <person name="Land M.L."/>
            <person name="Lindell D."/>
            <person name="Post A.F."/>
            <person name="Regala W."/>
            <person name="Shah M."/>
            <person name="Shaw S.L."/>
            <person name="Steglich C."/>
            <person name="Sullivan M.B."/>
            <person name="Ting C.S."/>
            <person name="Tolonen A."/>
            <person name="Webb E.A."/>
            <person name="Zinser E.R."/>
            <person name="Chisholm S.W."/>
        </authorList>
    </citation>
    <scope>NUCLEOTIDE SEQUENCE [LARGE SCALE GENOMIC DNA]</scope>
    <source>
        <strain>CCMP1986 / NIES-2087 / MED4</strain>
    </source>
</reference>
<proteinExistence type="inferred from homology"/>
<name>SYFA_PROMP</name>
<accession>Q7V0I7</accession>
<dbReference type="EC" id="6.1.1.20" evidence="1"/>
<dbReference type="EMBL" id="BX548174">
    <property type="protein sequence ID" value="CAE19729.1"/>
    <property type="molecule type" value="Genomic_DNA"/>
</dbReference>
<dbReference type="RefSeq" id="WP_011132904.1">
    <property type="nucleotide sequence ID" value="NC_005072.1"/>
</dbReference>
<dbReference type="SMR" id="Q7V0I7"/>
<dbReference type="STRING" id="59919.PMM1270"/>
<dbReference type="KEGG" id="pmm:PMM1270"/>
<dbReference type="eggNOG" id="COG0016">
    <property type="taxonomic scope" value="Bacteria"/>
</dbReference>
<dbReference type="HOGENOM" id="CLU_025086_0_1_3"/>
<dbReference type="OrthoDB" id="9800719at2"/>
<dbReference type="Proteomes" id="UP000001026">
    <property type="component" value="Chromosome"/>
</dbReference>
<dbReference type="GO" id="GO:0005737">
    <property type="term" value="C:cytoplasm"/>
    <property type="evidence" value="ECO:0007669"/>
    <property type="project" value="UniProtKB-SubCell"/>
</dbReference>
<dbReference type="GO" id="GO:0005524">
    <property type="term" value="F:ATP binding"/>
    <property type="evidence" value="ECO:0007669"/>
    <property type="project" value="UniProtKB-UniRule"/>
</dbReference>
<dbReference type="GO" id="GO:0000287">
    <property type="term" value="F:magnesium ion binding"/>
    <property type="evidence" value="ECO:0007669"/>
    <property type="project" value="UniProtKB-UniRule"/>
</dbReference>
<dbReference type="GO" id="GO:0004826">
    <property type="term" value="F:phenylalanine-tRNA ligase activity"/>
    <property type="evidence" value="ECO:0007669"/>
    <property type="project" value="UniProtKB-UniRule"/>
</dbReference>
<dbReference type="GO" id="GO:0000049">
    <property type="term" value="F:tRNA binding"/>
    <property type="evidence" value="ECO:0007669"/>
    <property type="project" value="InterPro"/>
</dbReference>
<dbReference type="GO" id="GO:0006432">
    <property type="term" value="P:phenylalanyl-tRNA aminoacylation"/>
    <property type="evidence" value="ECO:0007669"/>
    <property type="project" value="UniProtKB-UniRule"/>
</dbReference>
<dbReference type="CDD" id="cd00496">
    <property type="entry name" value="PheRS_alpha_core"/>
    <property type="match status" value="1"/>
</dbReference>
<dbReference type="FunFam" id="3.30.930.10:FF:000003">
    <property type="entry name" value="Phenylalanine--tRNA ligase alpha subunit"/>
    <property type="match status" value="1"/>
</dbReference>
<dbReference type="Gene3D" id="3.30.930.10">
    <property type="entry name" value="Bira Bifunctional Protein, Domain 2"/>
    <property type="match status" value="1"/>
</dbReference>
<dbReference type="HAMAP" id="MF_00281">
    <property type="entry name" value="Phe_tRNA_synth_alpha1"/>
    <property type="match status" value="1"/>
</dbReference>
<dbReference type="InterPro" id="IPR006195">
    <property type="entry name" value="aa-tRNA-synth_II"/>
</dbReference>
<dbReference type="InterPro" id="IPR045864">
    <property type="entry name" value="aa-tRNA-synth_II/BPL/LPL"/>
</dbReference>
<dbReference type="InterPro" id="IPR004529">
    <property type="entry name" value="Phe-tRNA-synth_IIc_asu"/>
</dbReference>
<dbReference type="InterPro" id="IPR004188">
    <property type="entry name" value="Phe-tRNA_ligase_II_N"/>
</dbReference>
<dbReference type="InterPro" id="IPR022911">
    <property type="entry name" value="Phe_tRNA_ligase_alpha1_bac"/>
</dbReference>
<dbReference type="InterPro" id="IPR002319">
    <property type="entry name" value="Phenylalanyl-tRNA_Synthase"/>
</dbReference>
<dbReference type="InterPro" id="IPR010978">
    <property type="entry name" value="tRNA-bd_arm"/>
</dbReference>
<dbReference type="NCBIfam" id="TIGR00468">
    <property type="entry name" value="pheS"/>
    <property type="match status" value="1"/>
</dbReference>
<dbReference type="PANTHER" id="PTHR11538:SF41">
    <property type="entry name" value="PHENYLALANINE--TRNA LIGASE, MITOCHONDRIAL"/>
    <property type="match status" value="1"/>
</dbReference>
<dbReference type="PANTHER" id="PTHR11538">
    <property type="entry name" value="PHENYLALANYL-TRNA SYNTHETASE"/>
    <property type="match status" value="1"/>
</dbReference>
<dbReference type="Pfam" id="PF02912">
    <property type="entry name" value="Phe_tRNA-synt_N"/>
    <property type="match status" value="1"/>
</dbReference>
<dbReference type="Pfam" id="PF01409">
    <property type="entry name" value="tRNA-synt_2d"/>
    <property type="match status" value="1"/>
</dbReference>
<dbReference type="SUPFAM" id="SSF55681">
    <property type="entry name" value="Class II aaRS and biotin synthetases"/>
    <property type="match status" value="1"/>
</dbReference>
<dbReference type="SUPFAM" id="SSF46589">
    <property type="entry name" value="tRNA-binding arm"/>
    <property type="match status" value="1"/>
</dbReference>
<dbReference type="PROSITE" id="PS50862">
    <property type="entry name" value="AA_TRNA_LIGASE_II"/>
    <property type="match status" value="1"/>
</dbReference>
<comment type="catalytic activity">
    <reaction evidence="1">
        <text>tRNA(Phe) + L-phenylalanine + ATP = L-phenylalanyl-tRNA(Phe) + AMP + diphosphate + H(+)</text>
        <dbReference type="Rhea" id="RHEA:19413"/>
        <dbReference type="Rhea" id="RHEA-COMP:9668"/>
        <dbReference type="Rhea" id="RHEA-COMP:9699"/>
        <dbReference type="ChEBI" id="CHEBI:15378"/>
        <dbReference type="ChEBI" id="CHEBI:30616"/>
        <dbReference type="ChEBI" id="CHEBI:33019"/>
        <dbReference type="ChEBI" id="CHEBI:58095"/>
        <dbReference type="ChEBI" id="CHEBI:78442"/>
        <dbReference type="ChEBI" id="CHEBI:78531"/>
        <dbReference type="ChEBI" id="CHEBI:456215"/>
        <dbReference type="EC" id="6.1.1.20"/>
    </reaction>
</comment>
<comment type="cofactor">
    <cofactor evidence="1">
        <name>Mg(2+)</name>
        <dbReference type="ChEBI" id="CHEBI:18420"/>
    </cofactor>
    <text evidence="1">Binds 2 magnesium ions per tetramer.</text>
</comment>
<comment type="subunit">
    <text evidence="1">Tetramer of two alpha and two beta subunits.</text>
</comment>
<comment type="subcellular location">
    <subcellularLocation>
        <location evidence="1">Cytoplasm</location>
    </subcellularLocation>
</comment>
<comment type="similarity">
    <text evidence="1">Belongs to the class-II aminoacyl-tRNA synthetase family. Phe-tRNA synthetase alpha subunit type 1 subfamily.</text>
</comment>
<evidence type="ECO:0000255" key="1">
    <source>
        <dbReference type="HAMAP-Rule" id="MF_00281"/>
    </source>
</evidence>
<organism>
    <name type="scientific">Prochlorococcus marinus subsp. pastoris (strain CCMP1986 / NIES-2087 / MED4)</name>
    <dbReference type="NCBI Taxonomy" id="59919"/>
    <lineage>
        <taxon>Bacteria</taxon>
        <taxon>Bacillati</taxon>
        <taxon>Cyanobacteriota</taxon>
        <taxon>Cyanophyceae</taxon>
        <taxon>Synechococcales</taxon>
        <taxon>Prochlorococcaceae</taxon>
        <taxon>Prochlorococcus</taxon>
    </lineage>
</organism>
<feature type="chain" id="PRO_0000126743" description="Phenylalanine--tRNA ligase alpha subunit">
    <location>
        <begin position="1"/>
        <end position="335"/>
    </location>
</feature>
<feature type="binding site" evidence="1">
    <location>
        <position position="262"/>
    </location>
    <ligand>
        <name>Mg(2+)</name>
        <dbReference type="ChEBI" id="CHEBI:18420"/>
        <note>shared with beta subunit</note>
    </ligand>
</feature>
<gene>
    <name evidence="1" type="primary">pheS</name>
    <name type="ordered locus">PMM1270</name>
</gene>